<evidence type="ECO:0000255" key="1">
    <source>
        <dbReference type="HAMAP-Rule" id="MF_00133"/>
    </source>
</evidence>
<protein>
    <recommendedName>
        <fullName evidence="1">Tryptophan synthase beta chain</fullName>
        <ecNumber evidence="1">4.2.1.20</ecNumber>
    </recommendedName>
</protein>
<keyword id="KW-0028">Amino-acid biosynthesis</keyword>
<keyword id="KW-0057">Aromatic amino acid biosynthesis</keyword>
<keyword id="KW-0456">Lyase</keyword>
<keyword id="KW-0663">Pyridoxal phosphate</keyword>
<keyword id="KW-0822">Tryptophan biosynthesis</keyword>
<gene>
    <name evidence="1" type="primary">trpB</name>
    <name type="ordered locus">Ava_1911</name>
</gene>
<dbReference type="EC" id="4.2.1.20" evidence="1"/>
<dbReference type="EMBL" id="CP000117">
    <property type="protein sequence ID" value="ABA21533.1"/>
    <property type="molecule type" value="Genomic_DNA"/>
</dbReference>
<dbReference type="SMR" id="Q3MBV3"/>
<dbReference type="STRING" id="240292.Ava_1911"/>
<dbReference type="KEGG" id="ava:Ava_1911"/>
<dbReference type="eggNOG" id="COG0133">
    <property type="taxonomic scope" value="Bacteria"/>
</dbReference>
<dbReference type="HOGENOM" id="CLU_016734_3_1_3"/>
<dbReference type="UniPathway" id="UPA00035">
    <property type="reaction ID" value="UER00044"/>
</dbReference>
<dbReference type="Proteomes" id="UP000002533">
    <property type="component" value="Chromosome"/>
</dbReference>
<dbReference type="GO" id="GO:0005737">
    <property type="term" value="C:cytoplasm"/>
    <property type="evidence" value="ECO:0007669"/>
    <property type="project" value="TreeGrafter"/>
</dbReference>
<dbReference type="GO" id="GO:0004834">
    <property type="term" value="F:tryptophan synthase activity"/>
    <property type="evidence" value="ECO:0007669"/>
    <property type="project" value="UniProtKB-UniRule"/>
</dbReference>
<dbReference type="CDD" id="cd06446">
    <property type="entry name" value="Trp-synth_B"/>
    <property type="match status" value="1"/>
</dbReference>
<dbReference type="FunFam" id="3.40.50.1100:FF:000001">
    <property type="entry name" value="Tryptophan synthase beta chain"/>
    <property type="match status" value="1"/>
</dbReference>
<dbReference type="FunFam" id="3.40.50.1100:FF:000004">
    <property type="entry name" value="Tryptophan synthase beta chain"/>
    <property type="match status" value="1"/>
</dbReference>
<dbReference type="Gene3D" id="3.40.50.1100">
    <property type="match status" value="2"/>
</dbReference>
<dbReference type="HAMAP" id="MF_00133">
    <property type="entry name" value="Trp_synth_beta"/>
    <property type="match status" value="1"/>
</dbReference>
<dbReference type="InterPro" id="IPR006653">
    <property type="entry name" value="Trp_synth_b_CS"/>
</dbReference>
<dbReference type="InterPro" id="IPR006654">
    <property type="entry name" value="Trp_synth_beta"/>
</dbReference>
<dbReference type="InterPro" id="IPR023026">
    <property type="entry name" value="Trp_synth_beta/beta-like"/>
</dbReference>
<dbReference type="InterPro" id="IPR001926">
    <property type="entry name" value="TrpB-like_PALP"/>
</dbReference>
<dbReference type="InterPro" id="IPR036052">
    <property type="entry name" value="TrpB-like_PALP_sf"/>
</dbReference>
<dbReference type="NCBIfam" id="TIGR00263">
    <property type="entry name" value="trpB"/>
    <property type="match status" value="1"/>
</dbReference>
<dbReference type="PANTHER" id="PTHR48077:SF3">
    <property type="entry name" value="TRYPTOPHAN SYNTHASE"/>
    <property type="match status" value="1"/>
</dbReference>
<dbReference type="PANTHER" id="PTHR48077">
    <property type="entry name" value="TRYPTOPHAN SYNTHASE-RELATED"/>
    <property type="match status" value="1"/>
</dbReference>
<dbReference type="Pfam" id="PF00291">
    <property type="entry name" value="PALP"/>
    <property type="match status" value="1"/>
</dbReference>
<dbReference type="PIRSF" id="PIRSF001413">
    <property type="entry name" value="Trp_syn_beta"/>
    <property type="match status" value="1"/>
</dbReference>
<dbReference type="SUPFAM" id="SSF53686">
    <property type="entry name" value="Tryptophan synthase beta subunit-like PLP-dependent enzymes"/>
    <property type="match status" value="1"/>
</dbReference>
<dbReference type="PROSITE" id="PS00168">
    <property type="entry name" value="TRP_SYNTHASE_BETA"/>
    <property type="match status" value="1"/>
</dbReference>
<sequence>MTTTPLSPSTPSNAQVPDIQGRFGRFGGKYVPETLMPALAELETAYQKYRHDPGFQAELQQLLRDYVGRATPLYFAERLTAHYARPDGTGAQIYLKREDLNHTGAHKINNALGQVLLAKRMGKQRIIAETGAGQHGVATATVCARFGLECVIYMGVHDMERQALNVFRMRLMGAEVRPVEAGTGTLKDATSEAIRDWVTNVETTHYILGSVAGPHPYPMMVRDFHAVIGQETRAQALEKWGGLPDILLACVGGGSNAMGLFYEFVNESSIRLIGVEAAGEGVNTEKHAATLTKGRVGVLHGAMSYLLQDEDGQVIEAHSISAGLDYPGVGPEHSYLKDVGRAEYYSVTDEQALAAFQRLSRLEGIIPALETAHAIAYLETLCPQLDGSPRIIINCSGRGDKDVQTVAKFLIPQ</sequence>
<accession>Q3MBV3</accession>
<name>TRPB_TRIV2</name>
<reference key="1">
    <citation type="journal article" date="2014" name="Stand. Genomic Sci.">
        <title>Complete genome sequence of Anabaena variabilis ATCC 29413.</title>
        <authorList>
            <person name="Thiel T."/>
            <person name="Pratte B.S."/>
            <person name="Zhong J."/>
            <person name="Goodwin L."/>
            <person name="Copeland A."/>
            <person name="Lucas S."/>
            <person name="Han C."/>
            <person name="Pitluck S."/>
            <person name="Land M.L."/>
            <person name="Kyrpides N.C."/>
            <person name="Woyke T."/>
        </authorList>
    </citation>
    <scope>NUCLEOTIDE SEQUENCE [LARGE SCALE GENOMIC DNA]</scope>
    <source>
        <strain>ATCC 29413 / PCC 7937</strain>
    </source>
</reference>
<proteinExistence type="inferred from homology"/>
<organism>
    <name type="scientific">Trichormus variabilis (strain ATCC 29413 / PCC 7937)</name>
    <name type="common">Anabaena variabilis</name>
    <dbReference type="NCBI Taxonomy" id="240292"/>
    <lineage>
        <taxon>Bacteria</taxon>
        <taxon>Bacillati</taxon>
        <taxon>Cyanobacteriota</taxon>
        <taxon>Cyanophyceae</taxon>
        <taxon>Nostocales</taxon>
        <taxon>Nostocaceae</taxon>
        <taxon>Trichormus</taxon>
    </lineage>
</organism>
<feature type="chain" id="PRO_1000018319" description="Tryptophan synthase beta chain">
    <location>
        <begin position="1"/>
        <end position="413"/>
    </location>
</feature>
<feature type="modified residue" description="N6-(pyridoxal phosphate)lysine" evidence="1">
    <location>
        <position position="107"/>
    </location>
</feature>
<comment type="function">
    <text evidence="1">The beta subunit is responsible for the synthesis of L-tryptophan from indole and L-serine.</text>
</comment>
<comment type="catalytic activity">
    <reaction evidence="1">
        <text>(1S,2R)-1-C-(indol-3-yl)glycerol 3-phosphate + L-serine = D-glyceraldehyde 3-phosphate + L-tryptophan + H2O</text>
        <dbReference type="Rhea" id="RHEA:10532"/>
        <dbReference type="ChEBI" id="CHEBI:15377"/>
        <dbReference type="ChEBI" id="CHEBI:33384"/>
        <dbReference type="ChEBI" id="CHEBI:57912"/>
        <dbReference type="ChEBI" id="CHEBI:58866"/>
        <dbReference type="ChEBI" id="CHEBI:59776"/>
        <dbReference type="EC" id="4.2.1.20"/>
    </reaction>
</comment>
<comment type="cofactor">
    <cofactor evidence="1">
        <name>pyridoxal 5'-phosphate</name>
        <dbReference type="ChEBI" id="CHEBI:597326"/>
    </cofactor>
</comment>
<comment type="pathway">
    <text evidence="1">Amino-acid biosynthesis; L-tryptophan biosynthesis; L-tryptophan from chorismate: step 5/5.</text>
</comment>
<comment type="subunit">
    <text evidence="1">Tetramer of two alpha and two beta chains.</text>
</comment>
<comment type="similarity">
    <text evidence="1">Belongs to the TrpB family.</text>
</comment>